<keyword id="KW-0002">3D-structure</keyword>
<keyword id="KW-0007">Acetylation</keyword>
<keyword id="KW-0010">Activator</keyword>
<keyword id="KW-0539">Nucleus</keyword>
<keyword id="KW-1185">Reference proteome</keyword>
<keyword id="KW-0804">Transcription</keyword>
<keyword id="KW-0805">Transcription regulation</keyword>
<organism>
    <name type="scientific">Mus musculus</name>
    <name type="common">Mouse</name>
    <dbReference type="NCBI Taxonomy" id="10090"/>
    <lineage>
        <taxon>Eukaryota</taxon>
        <taxon>Metazoa</taxon>
        <taxon>Chordata</taxon>
        <taxon>Craniata</taxon>
        <taxon>Vertebrata</taxon>
        <taxon>Euteleostomi</taxon>
        <taxon>Mammalia</taxon>
        <taxon>Eutheria</taxon>
        <taxon>Euarchontoglires</taxon>
        <taxon>Glires</taxon>
        <taxon>Rodentia</taxon>
        <taxon>Myomorpha</taxon>
        <taxon>Muroidea</taxon>
        <taxon>Muridae</taxon>
        <taxon>Murinae</taxon>
        <taxon>Mus</taxon>
        <taxon>Mus</taxon>
    </lineage>
</organism>
<feature type="initiator methionine" description="Removed" evidence="2">
    <location>
        <position position="1"/>
    </location>
</feature>
<feature type="chain" id="PRO_0000288059" description="Mediator of RNA polymerase II transcription subunit 29">
    <location>
        <begin position="2"/>
        <end position="199"/>
    </location>
</feature>
<feature type="region of interest" description="Disordered" evidence="3">
    <location>
        <begin position="1"/>
        <end position="47"/>
    </location>
</feature>
<feature type="compositionally biased region" description="Low complexity" evidence="3">
    <location>
        <begin position="1"/>
        <end position="17"/>
    </location>
</feature>
<feature type="compositionally biased region" description="Gly residues" evidence="3">
    <location>
        <begin position="18"/>
        <end position="27"/>
    </location>
</feature>
<feature type="compositionally biased region" description="Low complexity" evidence="3">
    <location>
        <begin position="28"/>
        <end position="47"/>
    </location>
</feature>
<feature type="modified residue" description="N-acetylalanine" evidence="2">
    <location>
        <position position="2"/>
    </location>
</feature>
<comment type="function">
    <text evidence="1">Component of the Mediator complex, a coactivator involved in the regulated transcription of nearly all RNA polymerase II-dependent genes. Mediator functions as a bridge to convey information from gene-specific regulatory proteins to the basal RNA polymerase II transcription machinery. Mediator is recruited to promoters by direct interactions with regulatory proteins and serves as a scaffold for the assembly of a functional preinitiation complex with RNA polymerase II and the general transcription factors (By similarity).</text>
</comment>
<comment type="subunit">
    <text evidence="1">Component of the Mediator complex, which is composed of MED1, MED4, MED6, MED7, MED8, MED9, MED10, MED11, MED12, MED13, MED13L, MED14, MED15, MED16, MED17, MED18, MED19, MED20, MED21, MED22, MED23, MED24, MED25, MED26, MED27, MED29, MED30, MED31, CCNC, CDK8 and CDC2L6/CDK11. The MED12, MED13, CCNC and CDK8 subunits form a distinct module termed the CDK8 module. Mediator containing the CDK8 module is less active than Mediator lacking this module in supporting transcriptional activation. Individual preparations of the Mediator complex lacking one or more distinct subunits have been variously termed ARC, CRSP, DRIP, PC2, SMCC and TRAP. Associates with the MED18/MED20 heteromer (By similarity).</text>
</comment>
<comment type="subcellular location">
    <subcellularLocation>
        <location evidence="1">Nucleus</location>
    </subcellularLocation>
</comment>
<comment type="similarity">
    <text evidence="4">Belongs to the Mediator complex subunit 29 family.</text>
</comment>
<sequence>MAAPQPQAAAVSSASGVSGPGSAGGPGPQQQPQPTQLVGSAQSGLLQQQQQDFDPVQRYKMLIPQLKESLQTLMKVAAQNLIQNTNIDNGQKSSDAPLQRFDKCLEEFYALCDQLELCLRLAHECLSQSCDSAKHSPTLVPTATKPDAVQPDSLPYPQYLAVIKAQITCAKDIHTALLDCANKVTGKTTAPSTGPGGSL</sequence>
<protein>
    <recommendedName>
        <fullName>Mediator of RNA polymerase II transcription subunit 29</fullName>
    </recommendedName>
    <alternativeName>
        <fullName>Intersex-like protein</fullName>
    </alternativeName>
    <alternativeName>
        <fullName>Mediator complex subunit 29</fullName>
    </alternativeName>
</protein>
<reference key="1">
    <citation type="journal article" date="2005" name="Science">
        <title>The transcriptional landscape of the mammalian genome.</title>
        <authorList>
            <person name="Carninci P."/>
            <person name="Kasukawa T."/>
            <person name="Katayama S."/>
            <person name="Gough J."/>
            <person name="Frith M.C."/>
            <person name="Maeda N."/>
            <person name="Oyama R."/>
            <person name="Ravasi T."/>
            <person name="Lenhard B."/>
            <person name="Wells C."/>
            <person name="Kodzius R."/>
            <person name="Shimokawa K."/>
            <person name="Bajic V.B."/>
            <person name="Brenner S.E."/>
            <person name="Batalov S."/>
            <person name="Forrest A.R."/>
            <person name="Zavolan M."/>
            <person name="Davis M.J."/>
            <person name="Wilming L.G."/>
            <person name="Aidinis V."/>
            <person name="Allen J.E."/>
            <person name="Ambesi-Impiombato A."/>
            <person name="Apweiler R."/>
            <person name="Aturaliya R.N."/>
            <person name="Bailey T.L."/>
            <person name="Bansal M."/>
            <person name="Baxter L."/>
            <person name="Beisel K.W."/>
            <person name="Bersano T."/>
            <person name="Bono H."/>
            <person name="Chalk A.M."/>
            <person name="Chiu K.P."/>
            <person name="Choudhary V."/>
            <person name="Christoffels A."/>
            <person name="Clutterbuck D.R."/>
            <person name="Crowe M.L."/>
            <person name="Dalla E."/>
            <person name="Dalrymple B.P."/>
            <person name="de Bono B."/>
            <person name="Della Gatta G."/>
            <person name="di Bernardo D."/>
            <person name="Down T."/>
            <person name="Engstrom P."/>
            <person name="Fagiolini M."/>
            <person name="Faulkner G."/>
            <person name="Fletcher C.F."/>
            <person name="Fukushima T."/>
            <person name="Furuno M."/>
            <person name="Futaki S."/>
            <person name="Gariboldi M."/>
            <person name="Georgii-Hemming P."/>
            <person name="Gingeras T.R."/>
            <person name="Gojobori T."/>
            <person name="Green R.E."/>
            <person name="Gustincich S."/>
            <person name="Harbers M."/>
            <person name="Hayashi Y."/>
            <person name="Hensch T.K."/>
            <person name="Hirokawa N."/>
            <person name="Hill D."/>
            <person name="Huminiecki L."/>
            <person name="Iacono M."/>
            <person name="Ikeo K."/>
            <person name="Iwama A."/>
            <person name="Ishikawa T."/>
            <person name="Jakt M."/>
            <person name="Kanapin A."/>
            <person name="Katoh M."/>
            <person name="Kawasawa Y."/>
            <person name="Kelso J."/>
            <person name="Kitamura H."/>
            <person name="Kitano H."/>
            <person name="Kollias G."/>
            <person name="Krishnan S.P."/>
            <person name="Kruger A."/>
            <person name="Kummerfeld S.K."/>
            <person name="Kurochkin I.V."/>
            <person name="Lareau L.F."/>
            <person name="Lazarevic D."/>
            <person name="Lipovich L."/>
            <person name="Liu J."/>
            <person name="Liuni S."/>
            <person name="McWilliam S."/>
            <person name="Madan Babu M."/>
            <person name="Madera M."/>
            <person name="Marchionni L."/>
            <person name="Matsuda H."/>
            <person name="Matsuzawa S."/>
            <person name="Miki H."/>
            <person name="Mignone F."/>
            <person name="Miyake S."/>
            <person name="Morris K."/>
            <person name="Mottagui-Tabar S."/>
            <person name="Mulder N."/>
            <person name="Nakano N."/>
            <person name="Nakauchi H."/>
            <person name="Ng P."/>
            <person name="Nilsson R."/>
            <person name="Nishiguchi S."/>
            <person name="Nishikawa S."/>
            <person name="Nori F."/>
            <person name="Ohara O."/>
            <person name="Okazaki Y."/>
            <person name="Orlando V."/>
            <person name="Pang K.C."/>
            <person name="Pavan W.J."/>
            <person name="Pavesi G."/>
            <person name="Pesole G."/>
            <person name="Petrovsky N."/>
            <person name="Piazza S."/>
            <person name="Reed J."/>
            <person name="Reid J.F."/>
            <person name="Ring B.Z."/>
            <person name="Ringwald M."/>
            <person name="Rost B."/>
            <person name="Ruan Y."/>
            <person name="Salzberg S.L."/>
            <person name="Sandelin A."/>
            <person name="Schneider C."/>
            <person name="Schoenbach C."/>
            <person name="Sekiguchi K."/>
            <person name="Semple C.A."/>
            <person name="Seno S."/>
            <person name="Sessa L."/>
            <person name="Sheng Y."/>
            <person name="Shibata Y."/>
            <person name="Shimada H."/>
            <person name="Shimada K."/>
            <person name="Silva D."/>
            <person name="Sinclair B."/>
            <person name="Sperling S."/>
            <person name="Stupka E."/>
            <person name="Sugiura K."/>
            <person name="Sultana R."/>
            <person name="Takenaka Y."/>
            <person name="Taki K."/>
            <person name="Tammoja K."/>
            <person name="Tan S.L."/>
            <person name="Tang S."/>
            <person name="Taylor M.S."/>
            <person name="Tegner J."/>
            <person name="Teichmann S.A."/>
            <person name="Ueda H.R."/>
            <person name="van Nimwegen E."/>
            <person name="Verardo R."/>
            <person name="Wei C.L."/>
            <person name="Yagi K."/>
            <person name="Yamanishi H."/>
            <person name="Zabarovsky E."/>
            <person name="Zhu S."/>
            <person name="Zimmer A."/>
            <person name="Hide W."/>
            <person name="Bult C."/>
            <person name="Grimmond S.M."/>
            <person name="Teasdale R.D."/>
            <person name="Liu E.T."/>
            <person name="Brusic V."/>
            <person name="Quackenbush J."/>
            <person name="Wahlestedt C."/>
            <person name="Mattick J.S."/>
            <person name="Hume D.A."/>
            <person name="Kai C."/>
            <person name="Sasaki D."/>
            <person name="Tomaru Y."/>
            <person name="Fukuda S."/>
            <person name="Kanamori-Katayama M."/>
            <person name="Suzuki M."/>
            <person name="Aoki J."/>
            <person name="Arakawa T."/>
            <person name="Iida J."/>
            <person name="Imamura K."/>
            <person name="Itoh M."/>
            <person name="Kato T."/>
            <person name="Kawaji H."/>
            <person name="Kawagashira N."/>
            <person name="Kawashima T."/>
            <person name="Kojima M."/>
            <person name="Kondo S."/>
            <person name="Konno H."/>
            <person name="Nakano K."/>
            <person name="Ninomiya N."/>
            <person name="Nishio T."/>
            <person name="Okada M."/>
            <person name="Plessy C."/>
            <person name="Shibata K."/>
            <person name="Shiraki T."/>
            <person name="Suzuki S."/>
            <person name="Tagami M."/>
            <person name="Waki K."/>
            <person name="Watahiki A."/>
            <person name="Okamura-Oho Y."/>
            <person name="Suzuki H."/>
            <person name="Kawai J."/>
            <person name="Hayashizaki Y."/>
        </authorList>
    </citation>
    <scope>NUCLEOTIDE SEQUENCE [LARGE SCALE MRNA]</scope>
    <source>
        <strain>C57BL/6J</strain>
        <tissue>Cerebellum</tissue>
    </source>
</reference>
<reference key="2">
    <citation type="journal article" date="2004" name="Genome Res.">
        <title>The status, quality, and expansion of the NIH full-length cDNA project: the Mammalian Gene Collection (MGC).</title>
        <authorList>
            <consortium name="The MGC Project Team"/>
        </authorList>
    </citation>
    <scope>NUCLEOTIDE SEQUENCE [LARGE SCALE MRNA]</scope>
    <source>
        <strain>C57BL/6J</strain>
        <strain>FVB/N</strain>
        <tissue>Brain</tissue>
        <tissue>Mammary tumor</tissue>
    </source>
</reference>
<dbReference type="EMBL" id="AK005112">
    <property type="protein sequence ID" value="BAB23826.1"/>
    <property type="molecule type" value="mRNA"/>
</dbReference>
<dbReference type="EMBL" id="BC023192">
    <property type="protein sequence ID" value="AAH23192.1"/>
    <property type="molecule type" value="mRNA"/>
</dbReference>
<dbReference type="EMBL" id="BC083314">
    <property type="protein sequence ID" value="AAH83314.1"/>
    <property type="molecule type" value="mRNA"/>
</dbReference>
<dbReference type="CCDS" id="CCDS21042.1"/>
<dbReference type="RefSeq" id="NP_080318.2">
    <property type="nucleotide sequence ID" value="NM_026042.3"/>
</dbReference>
<dbReference type="PDB" id="6W1S">
    <property type="method" value="EM"/>
    <property type="resolution" value="4.02 A"/>
    <property type="chains" value="X=52-185"/>
</dbReference>
<dbReference type="PDB" id="8T1I">
    <property type="method" value="EM"/>
    <property type="resolution" value="4.68 A"/>
    <property type="chains" value="X=1-199"/>
</dbReference>
<dbReference type="PDB" id="8T1L">
    <property type="method" value="EM"/>
    <property type="resolution" value="4.83 A"/>
    <property type="chains" value="X=1-199"/>
</dbReference>
<dbReference type="PDBsum" id="6W1S"/>
<dbReference type="PDBsum" id="8T1I"/>
<dbReference type="PDBsum" id="8T1L"/>
<dbReference type="EMDB" id="EMD-21514"/>
<dbReference type="EMDB" id="EMD-40968"/>
<dbReference type="EMDB" id="EMD-40971"/>
<dbReference type="SMR" id="Q9DB91"/>
<dbReference type="BioGRID" id="212029">
    <property type="interactions" value="3"/>
</dbReference>
<dbReference type="ComplexPortal" id="CPX-3264">
    <property type="entry name" value="Core mediator complex"/>
</dbReference>
<dbReference type="DIP" id="DIP-60702N"/>
<dbReference type="FunCoup" id="Q9DB91">
    <property type="interactions" value="3311"/>
</dbReference>
<dbReference type="IntAct" id="Q9DB91">
    <property type="interactions" value="3"/>
</dbReference>
<dbReference type="STRING" id="10090.ENSMUSP00000003536"/>
<dbReference type="iPTMnet" id="Q9DB91"/>
<dbReference type="PhosphoSitePlus" id="Q9DB91"/>
<dbReference type="PaxDb" id="10090-ENSMUSP00000003536"/>
<dbReference type="PeptideAtlas" id="Q9DB91"/>
<dbReference type="ProteomicsDB" id="295921"/>
<dbReference type="Pumba" id="Q9DB91"/>
<dbReference type="Antibodypedia" id="30311">
    <property type="antibodies" value="60 antibodies from 20 providers"/>
</dbReference>
<dbReference type="DNASU" id="67224"/>
<dbReference type="Ensembl" id="ENSMUST00000003536.9">
    <property type="protein sequence ID" value="ENSMUSP00000003536.9"/>
    <property type="gene ID" value="ENSMUSG00000003444.9"/>
</dbReference>
<dbReference type="GeneID" id="67224"/>
<dbReference type="KEGG" id="mmu:67224"/>
<dbReference type="UCSC" id="uc009fyt.2">
    <property type="organism name" value="mouse"/>
</dbReference>
<dbReference type="AGR" id="MGI:1914474"/>
<dbReference type="CTD" id="55588"/>
<dbReference type="MGI" id="MGI:1914474">
    <property type="gene designation" value="Med29"/>
</dbReference>
<dbReference type="VEuPathDB" id="HostDB:ENSMUSG00000003444"/>
<dbReference type="eggNOG" id="ENOG502QRNJ">
    <property type="taxonomic scope" value="Eukaryota"/>
</dbReference>
<dbReference type="GeneTree" id="ENSGT00390000007540"/>
<dbReference type="HOGENOM" id="CLU_101133_2_0_1"/>
<dbReference type="InParanoid" id="Q9DB91"/>
<dbReference type="OMA" id="LCMQQCT"/>
<dbReference type="OrthoDB" id="6366949at2759"/>
<dbReference type="PhylomeDB" id="Q9DB91"/>
<dbReference type="TreeFam" id="TF326632"/>
<dbReference type="BioGRID-ORCS" id="67224">
    <property type="hits" value="10 hits in 77 CRISPR screens"/>
</dbReference>
<dbReference type="PRO" id="PR:Q9DB91"/>
<dbReference type="Proteomes" id="UP000000589">
    <property type="component" value="Chromosome 7"/>
</dbReference>
<dbReference type="RNAct" id="Q9DB91">
    <property type="molecule type" value="protein"/>
</dbReference>
<dbReference type="Bgee" id="ENSMUSG00000003444">
    <property type="expression patterns" value="Expressed in dorsal pancreas and 204 other cell types or tissues"/>
</dbReference>
<dbReference type="GO" id="GO:0070847">
    <property type="term" value="C:core mediator complex"/>
    <property type="evidence" value="ECO:0000266"/>
    <property type="project" value="ComplexPortal"/>
</dbReference>
<dbReference type="GO" id="GO:0016592">
    <property type="term" value="C:mediator complex"/>
    <property type="evidence" value="ECO:0000266"/>
    <property type="project" value="MGI"/>
</dbReference>
<dbReference type="GO" id="GO:0005654">
    <property type="term" value="C:nucleoplasm"/>
    <property type="evidence" value="ECO:0000304"/>
    <property type="project" value="Reactome"/>
</dbReference>
<dbReference type="GO" id="GO:0005634">
    <property type="term" value="C:nucleus"/>
    <property type="evidence" value="ECO:0000266"/>
    <property type="project" value="ComplexPortal"/>
</dbReference>
<dbReference type="GO" id="GO:0032968">
    <property type="term" value="P:positive regulation of transcription elongation by RNA polymerase II"/>
    <property type="evidence" value="ECO:0000303"/>
    <property type="project" value="ComplexPortal"/>
</dbReference>
<dbReference type="GO" id="GO:0060261">
    <property type="term" value="P:positive regulation of transcription initiation by RNA polymerase II"/>
    <property type="evidence" value="ECO:0000303"/>
    <property type="project" value="ComplexPortal"/>
</dbReference>
<dbReference type="GO" id="GO:0051123">
    <property type="term" value="P:RNA polymerase II preinitiation complex assembly"/>
    <property type="evidence" value="ECO:0000303"/>
    <property type="project" value="ComplexPortal"/>
</dbReference>
<dbReference type="InterPro" id="IPR021018">
    <property type="entry name" value="Mediator_Med29_met"/>
</dbReference>
<dbReference type="PANTHER" id="PTHR28314">
    <property type="entry name" value="MEDIATOR OF RNA POLYMERASE II TRANSCRIPTION SUBUNIT 29"/>
    <property type="match status" value="1"/>
</dbReference>
<dbReference type="PANTHER" id="PTHR28314:SF1">
    <property type="entry name" value="MEDIATOR OF RNA POLYMERASE II TRANSCRIPTION SUBUNIT 29"/>
    <property type="match status" value="1"/>
</dbReference>
<dbReference type="Pfam" id="PF11568">
    <property type="entry name" value="Med29"/>
    <property type="match status" value="1"/>
</dbReference>
<name>MED29_MOUSE</name>
<evidence type="ECO:0000250" key="1"/>
<evidence type="ECO:0000250" key="2">
    <source>
        <dbReference type="UniProtKB" id="Q9NX70"/>
    </source>
</evidence>
<evidence type="ECO:0000256" key="3">
    <source>
        <dbReference type="SAM" id="MobiDB-lite"/>
    </source>
</evidence>
<evidence type="ECO:0000305" key="4"/>
<proteinExistence type="evidence at protein level"/>
<accession>Q9DB91</accession>
<gene>
    <name type="primary">Med29</name>
    <name type="synonym">Ixl</name>
</gene>